<keyword id="KW-0158">Chromosome</keyword>
<keyword id="KW-0539">Nucleus</keyword>
<keyword id="KW-1185">Reference proteome</keyword>
<accession>Q5ZHK9</accession>
<sequence length="114" mass="13397">MAKSLRSKWKRKMRAEKRKKNAPKELERLKSILRTGADVVMEEVKEVATVLPAKEALEKQDDCKMDVDNKRNKKTLLDQHGQYPIWMNSRQRKKLKAQRLKGKKKSKLPKGLAW</sequence>
<proteinExistence type="inferred from homology"/>
<feature type="chain" id="PRO_0000274348" description="Protein LLP homolog">
    <location>
        <begin position="1"/>
        <end position="114"/>
    </location>
</feature>
<feature type="region of interest" description="Disordered" evidence="3">
    <location>
        <begin position="1"/>
        <end position="23"/>
    </location>
</feature>
<feature type="region of interest" description="Disordered" evidence="3">
    <location>
        <begin position="91"/>
        <end position="114"/>
    </location>
</feature>
<feature type="compositionally biased region" description="Basic residues" evidence="3">
    <location>
        <begin position="1"/>
        <end position="21"/>
    </location>
</feature>
<feature type="compositionally biased region" description="Basic residues" evidence="3">
    <location>
        <begin position="91"/>
        <end position="108"/>
    </location>
</feature>
<protein>
    <recommendedName>
        <fullName>Protein LLP homolog</fullName>
    </recommendedName>
    <alternativeName>
        <fullName>Protein LAPS18-like</fullName>
    </alternativeName>
</protein>
<reference key="1">
    <citation type="journal article" date="2005" name="Genome Biol.">
        <title>Full-length cDNAs from chicken bursal lymphocytes to facilitate gene function analysis.</title>
        <authorList>
            <person name="Caldwell R.B."/>
            <person name="Kierzek A.M."/>
            <person name="Arakawa H."/>
            <person name="Bezzubov Y."/>
            <person name="Zaim J."/>
            <person name="Fiedler P."/>
            <person name="Kutter S."/>
            <person name="Blagodatski A."/>
            <person name="Kostovska D."/>
            <person name="Koter M."/>
            <person name="Plachy J."/>
            <person name="Carninci P."/>
            <person name="Hayashizaki Y."/>
            <person name="Buerstedde J.-M."/>
        </authorList>
    </citation>
    <scope>NUCLEOTIDE SEQUENCE [LARGE SCALE MRNA]</scope>
    <source>
        <strain>CB</strain>
        <tissue>Bursa of Fabricius</tissue>
    </source>
</reference>
<name>LLPH_CHICK</name>
<gene>
    <name type="primary">LLPH</name>
    <name type="ORF">RCJMB04_37b22</name>
</gene>
<organism>
    <name type="scientific">Gallus gallus</name>
    <name type="common">Chicken</name>
    <dbReference type="NCBI Taxonomy" id="9031"/>
    <lineage>
        <taxon>Eukaryota</taxon>
        <taxon>Metazoa</taxon>
        <taxon>Chordata</taxon>
        <taxon>Craniata</taxon>
        <taxon>Vertebrata</taxon>
        <taxon>Euteleostomi</taxon>
        <taxon>Archelosauria</taxon>
        <taxon>Archosauria</taxon>
        <taxon>Dinosauria</taxon>
        <taxon>Saurischia</taxon>
        <taxon>Theropoda</taxon>
        <taxon>Coelurosauria</taxon>
        <taxon>Aves</taxon>
        <taxon>Neognathae</taxon>
        <taxon>Galloanserae</taxon>
        <taxon>Galliformes</taxon>
        <taxon>Phasianidae</taxon>
        <taxon>Phasianinae</taxon>
        <taxon>Gallus</taxon>
    </lineage>
</organism>
<dbReference type="EMBL" id="AJ721125">
    <property type="protein sequence ID" value="CAG32784.1"/>
    <property type="molecule type" value="mRNA"/>
</dbReference>
<dbReference type="RefSeq" id="NP_001072969.1">
    <property type="nucleotide sequence ID" value="NM_001079501.3"/>
</dbReference>
<dbReference type="SMR" id="Q5ZHK9"/>
<dbReference type="FunCoup" id="Q5ZHK9">
    <property type="interactions" value="636"/>
</dbReference>
<dbReference type="STRING" id="9031.ENSGALP00000054870"/>
<dbReference type="PaxDb" id="9031-ENSGALP00000037846"/>
<dbReference type="GeneID" id="771027"/>
<dbReference type="KEGG" id="gga:771027"/>
<dbReference type="CTD" id="84298"/>
<dbReference type="VEuPathDB" id="HostDB:geneid_771027"/>
<dbReference type="eggNOG" id="KOG4811">
    <property type="taxonomic scope" value="Eukaryota"/>
</dbReference>
<dbReference type="HOGENOM" id="CLU_134502_0_0_1"/>
<dbReference type="InParanoid" id="Q5ZHK9"/>
<dbReference type="OMA" id="YGNYPVW"/>
<dbReference type="OrthoDB" id="6257894at2759"/>
<dbReference type="PhylomeDB" id="Q5ZHK9"/>
<dbReference type="TreeFam" id="TF314654"/>
<dbReference type="PRO" id="PR:Q5ZHK9"/>
<dbReference type="Proteomes" id="UP000000539">
    <property type="component" value="Chromosome 1"/>
</dbReference>
<dbReference type="Bgee" id="ENSGALG00000019358">
    <property type="expression patterns" value="Expressed in spermatid and 14 other cell types or tissues"/>
</dbReference>
<dbReference type="GO" id="GO:0005694">
    <property type="term" value="C:chromosome"/>
    <property type="evidence" value="ECO:0000250"/>
    <property type="project" value="UniProtKB"/>
</dbReference>
<dbReference type="GO" id="GO:0005730">
    <property type="term" value="C:nucleolus"/>
    <property type="evidence" value="ECO:0000250"/>
    <property type="project" value="UniProtKB"/>
</dbReference>
<dbReference type="GO" id="GO:0001099">
    <property type="term" value="F:basal RNA polymerase II transcription machinery binding"/>
    <property type="evidence" value="ECO:0000250"/>
    <property type="project" value="UniProtKB"/>
</dbReference>
<dbReference type="GO" id="GO:0097484">
    <property type="term" value="P:dendrite extension"/>
    <property type="evidence" value="ECO:0000250"/>
    <property type="project" value="UniProtKB"/>
</dbReference>
<dbReference type="GO" id="GO:0060999">
    <property type="term" value="P:positive regulation of dendritic spine development"/>
    <property type="evidence" value="ECO:0000250"/>
    <property type="project" value="UniProtKB"/>
</dbReference>
<dbReference type="InterPro" id="IPR018784">
    <property type="entry name" value="LLPH-like"/>
</dbReference>
<dbReference type="PANTHER" id="PTHR34253">
    <property type="entry name" value="PROTEIN LLP HOMOLOG"/>
    <property type="match status" value="1"/>
</dbReference>
<dbReference type="PANTHER" id="PTHR34253:SF1">
    <property type="entry name" value="PROTEIN LLP HOMOLOG"/>
    <property type="match status" value="1"/>
</dbReference>
<dbReference type="Pfam" id="PF10169">
    <property type="entry name" value="LLPH"/>
    <property type="match status" value="1"/>
</dbReference>
<comment type="function">
    <text evidence="2">Regulates dendritic and spine growth and synaptic transmission.</text>
</comment>
<comment type="subcellular location">
    <subcellularLocation>
        <location evidence="2">Nucleus</location>
        <location evidence="2">Nucleolus</location>
    </subcellularLocation>
    <subcellularLocation>
        <location evidence="1">Chromosome</location>
    </subcellularLocation>
    <text evidence="1 2">Cell-permeable protein (By similarity). Localizes at the chromosome periphery during mitosis (By similarity).</text>
</comment>
<comment type="similarity">
    <text evidence="4">Belongs to the learning-associated protein family.</text>
</comment>
<evidence type="ECO:0000250" key="1">
    <source>
        <dbReference type="UniProtKB" id="Q9BRT6"/>
    </source>
</evidence>
<evidence type="ECO:0000250" key="2">
    <source>
        <dbReference type="UniProtKB" id="Q9D945"/>
    </source>
</evidence>
<evidence type="ECO:0000256" key="3">
    <source>
        <dbReference type="SAM" id="MobiDB-lite"/>
    </source>
</evidence>
<evidence type="ECO:0000305" key="4"/>